<evidence type="ECO:0000250" key="1">
    <source>
        <dbReference type="UniProtKB" id="A0A4Y6HUI7"/>
    </source>
</evidence>
<evidence type="ECO:0000250" key="2">
    <source>
        <dbReference type="UniProtKB" id="P11544"/>
    </source>
</evidence>
<evidence type="ECO:0000250" key="3">
    <source>
        <dbReference type="UniProtKB" id="Q68G84"/>
    </source>
</evidence>
<evidence type="ECO:0000255" key="4">
    <source>
        <dbReference type="PROSITE-ProRule" id="PRU10122"/>
    </source>
</evidence>
<evidence type="ECO:0000303" key="5">
    <source>
    </source>
</evidence>
<evidence type="ECO:0000305" key="6"/>
<keyword id="KW-0963">Cytoplasm</keyword>
<keyword id="KW-0456">Lyase</keyword>
<keyword id="KW-0585">Phenylalanine catabolism</keyword>
<keyword id="KW-0587">Phenylpropanoid metabolism</keyword>
<protein>
    <recommendedName>
        <fullName evidence="5">Phenylalanine ammonia-lyase</fullName>
        <ecNumber evidence="1">4.3.1.24</ecNumber>
    </recommendedName>
</protein>
<proteinExistence type="inferred from homology"/>
<dbReference type="EC" id="4.3.1.24" evidence="1"/>
<dbReference type="EMBL" id="X13094">
    <property type="protein sequence ID" value="CAA31486.1"/>
    <property type="molecule type" value="Genomic_DNA"/>
</dbReference>
<dbReference type="PIR" id="S01999">
    <property type="entry name" value="S01999"/>
</dbReference>
<dbReference type="SMR" id="P10248"/>
<dbReference type="OrthoDB" id="10051290at2759"/>
<dbReference type="BRENDA" id="4.3.1.24">
    <property type="organism ID" value="5433"/>
</dbReference>
<dbReference type="UniPathway" id="UPA00713">
    <property type="reaction ID" value="UER00725"/>
</dbReference>
<dbReference type="GO" id="GO:0005737">
    <property type="term" value="C:cytoplasm"/>
    <property type="evidence" value="ECO:0007669"/>
    <property type="project" value="UniProtKB-SubCell"/>
</dbReference>
<dbReference type="GO" id="GO:0045548">
    <property type="term" value="F:phenylalanine ammonia-lyase activity"/>
    <property type="evidence" value="ECO:0000250"/>
    <property type="project" value="UniProtKB"/>
</dbReference>
<dbReference type="GO" id="GO:0009800">
    <property type="term" value="P:cinnamic acid biosynthetic process"/>
    <property type="evidence" value="ECO:0007669"/>
    <property type="project" value="UniProtKB-UniPathway"/>
</dbReference>
<dbReference type="GO" id="GO:0006559">
    <property type="term" value="P:L-phenylalanine catabolic process"/>
    <property type="evidence" value="ECO:0007669"/>
    <property type="project" value="UniProtKB-KW"/>
</dbReference>
<dbReference type="CDD" id="cd00332">
    <property type="entry name" value="PAL-HAL"/>
    <property type="match status" value="1"/>
</dbReference>
<dbReference type="Gene3D" id="1.20.200.10">
    <property type="entry name" value="Fumarase/aspartase (Central domain)"/>
    <property type="match status" value="1"/>
</dbReference>
<dbReference type="Gene3D" id="1.10.275.10">
    <property type="entry name" value="Fumarase/aspartase (N-terminal domain)"/>
    <property type="match status" value="1"/>
</dbReference>
<dbReference type="Gene3D" id="1.10.274.20">
    <property type="entry name" value="Phenylalanine ammonia-lyase 1, domain 3"/>
    <property type="match status" value="1"/>
</dbReference>
<dbReference type="InterPro" id="IPR001106">
    <property type="entry name" value="Aromatic_Lyase"/>
</dbReference>
<dbReference type="InterPro" id="IPR024083">
    <property type="entry name" value="Fumarase/histidase_N"/>
</dbReference>
<dbReference type="InterPro" id="IPR008948">
    <property type="entry name" value="L-Aspartase-like"/>
</dbReference>
<dbReference type="InterPro" id="IPR022313">
    <property type="entry name" value="Phe/His_NH3-lyase_AS"/>
</dbReference>
<dbReference type="InterPro" id="IPR005922">
    <property type="entry name" value="Phe_NH3-lyase"/>
</dbReference>
<dbReference type="InterPro" id="IPR023144">
    <property type="entry name" value="Phe_NH3-lyase_shielding_dom_sf"/>
</dbReference>
<dbReference type="NCBIfam" id="TIGR01226">
    <property type="entry name" value="phe_am_lyase"/>
    <property type="match status" value="1"/>
</dbReference>
<dbReference type="PANTHER" id="PTHR10362">
    <property type="entry name" value="HISTIDINE AMMONIA-LYASE"/>
    <property type="match status" value="1"/>
</dbReference>
<dbReference type="Pfam" id="PF00221">
    <property type="entry name" value="Lyase_aromatic"/>
    <property type="match status" value="1"/>
</dbReference>
<dbReference type="SUPFAM" id="SSF48557">
    <property type="entry name" value="L-aspartase-like"/>
    <property type="match status" value="1"/>
</dbReference>
<dbReference type="PROSITE" id="PS00488">
    <property type="entry name" value="PAL_HISTIDASE"/>
    <property type="match status" value="1"/>
</dbReference>
<gene>
    <name type="primary">PAL</name>
</gene>
<accession>P10248</accession>
<feature type="chain" id="PRO_0000215431" description="Phenylalanine ammonia-lyase">
    <location>
        <begin position="1"/>
        <end position="713"/>
    </location>
</feature>
<feature type="active site" description="Proton donor/acceptor" evidence="3">
    <location>
        <position position="116"/>
    </location>
</feature>
<feature type="binding site" evidence="3">
    <location>
        <position position="272"/>
    </location>
    <ligand>
        <name>(E)-cinnamate</name>
        <dbReference type="ChEBI" id="CHEBI:15669"/>
    </ligand>
</feature>
<feature type="binding site" evidence="3">
    <location>
        <position position="362"/>
    </location>
    <ligand>
        <name>(E)-cinnamate</name>
        <dbReference type="ChEBI" id="CHEBI:15669"/>
    </ligand>
</feature>
<feature type="binding site" evidence="3">
    <location>
        <position position="368"/>
    </location>
    <ligand>
        <name>(E)-cinnamate</name>
        <dbReference type="ChEBI" id="CHEBI:15669"/>
    </ligand>
</feature>
<feature type="binding site" evidence="3">
    <location>
        <position position="399"/>
    </location>
    <ligand>
        <name>(E)-cinnamate</name>
        <dbReference type="ChEBI" id="CHEBI:15669"/>
    </ligand>
</feature>
<feature type="binding site" evidence="2">
    <location>
        <position position="470"/>
    </location>
    <ligand>
        <name>(E)-cinnamate</name>
        <dbReference type="ChEBI" id="CHEBI:15669"/>
    </ligand>
</feature>
<feature type="binding site" evidence="2">
    <location>
        <position position="498"/>
    </location>
    <ligand>
        <name>(E)-cinnamate</name>
        <dbReference type="ChEBI" id="CHEBI:15669"/>
    </ligand>
</feature>
<feature type="binding site" evidence="3">
    <location>
        <position position="501"/>
    </location>
    <ligand>
        <name>(E)-cinnamate</name>
        <dbReference type="ChEBI" id="CHEBI:15669"/>
    </ligand>
</feature>
<feature type="modified residue" description="2,3-didehydroalanine (Ser)" evidence="4">
    <location>
        <position position="218"/>
    </location>
</feature>
<feature type="cross-link" description="5-imidazolinone (Ala-Gly)" evidence="3">
    <location>
        <begin position="217"/>
        <end position="219"/>
    </location>
</feature>
<sequence length="713" mass="76001">MAPSVDSIATSVANSLSNGLHAAAAANGGDVHKKTAGAGSLLPTTETTQLDIVERILADAGATDQIKLDGYTLTLGDVVGAARRGRSVKVADSPHIREKIDASVEFLRTQLDNSVYGVTTGFGGSADTRTEDAISLQKALLEHQLCGVLPTSMDGFALGRGLENSLPLEVVRGAMTIRVNSLTRGHSAVRIVVLEALTNFLNHGITPIVPLRGTISASGDLSPLSYIAASITGHPDSKVHVDGKIMSAQEAIALKGLQPVVLGPKEGLGLVNGTAVSASMATLALTDAHVLSLLAQALTALTVEAMVGHAGSFHPFLHDVTRPHPTQIEVARNIRTLLEGSKYAVHHETEVKVKDDEGILRQDRYPLRCSPQWLGPLVSDMIHAHAVLSLEAGQSTTDNPLIDLENKMTHHGGAFMASSVGNTMEKTRLAVALMGKVSFTQLTEMLNAGMNRALPSCLAAEDPSLSYHCKGLDIAAAAYTSELGHLANPVSTHVQPAEMGNQAINSLALISARRTAEANDVLSLLLATHLYCVLQAVDLRAMEFEHTKAFEPMVTELLKQHFGALATAEVEDKVRKSIYKRLQQNNSYDLEQRWHDTFSVATGAVVEALAGQEVSLASLNAWKVACAEKAIALTRSVRDSFWAAPSSSSPALKYLSPRTRVLYSFVREEVGVKARRGDVYLGKQEVTIGTNVSRIYEAIKSGCIAPVLVKMMA</sequence>
<reference key="1">
    <citation type="journal article" date="1988" name="Nucleic Acids Res.">
        <title>Nucleotide sequence of gene for phenylalanine ammonia-lyase from Rhodotorula rubra.</title>
        <authorList>
            <person name="Filpula D."/>
            <person name="Strausberg R.L."/>
            <person name="Vaslet C.A."/>
            <person name="Sykes A."/>
            <person name="Levy A."/>
        </authorList>
    </citation>
    <scope>NUCLEOTIDE SEQUENCE [GENOMIC DNA]</scope>
    <source>
        <strain>NRRL Y-15597</strain>
    </source>
</reference>
<reference key="2">
    <citation type="journal article" date="1988" name="Nucleic Acids Res.">
        <title>cDNA and genomic cloning of yeast phenylalanine ammonia-lyase genes reveal genomic intron deletions.</title>
        <authorList>
            <person name="Filpula D."/>
            <person name="Strausberg R.L."/>
            <person name="Vaslet C.A."/>
            <person name="Sykes A."/>
            <person name="Levy A."/>
        </authorList>
    </citation>
    <scope>GENE STRUCTURE</scope>
    <source>
        <strain>NRRL Y-15597</strain>
    </source>
</reference>
<organism>
    <name type="scientific">Rhodotorula mucilaginosa</name>
    <name type="common">Yeast</name>
    <name type="synonym">Rhodotorula rubra</name>
    <dbReference type="NCBI Taxonomy" id="5537"/>
    <lineage>
        <taxon>Eukaryota</taxon>
        <taxon>Fungi</taxon>
        <taxon>Dikarya</taxon>
        <taxon>Basidiomycota</taxon>
        <taxon>Pucciniomycotina</taxon>
        <taxon>Microbotryomycetes</taxon>
        <taxon>Sporidiobolales</taxon>
        <taxon>Sporidiobolaceae</taxon>
        <taxon>Rhodotorula</taxon>
    </lineage>
</organism>
<name>PALY_RHOMI</name>
<comment type="function">
    <text evidence="1 2">Catalyzes the non-oxidative deamination of L-phenylalanine to form trans-cinnamic acid and a free ammonium ion (By similarity). Facilitates the commitment step in phenylpropanoid pathways that produce secondary metabolites such as lignins, coumarins and flavonoids (By similarity).</text>
</comment>
<comment type="catalytic activity">
    <reaction evidence="1">
        <text>L-phenylalanine = (E)-cinnamate + NH4(+)</text>
        <dbReference type="Rhea" id="RHEA:21384"/>
        <dbReference type="ChEBI" id="CHEBI:15669"/>
        <dbReference type="ChEBI" id="CHEBI:28938"/>
        <dbReference type="ChEBI" id="CHEBI:58095"/>
        <dbReference type="EC" id="4.3.1.24"/>
    </reaction>
</comment>
<comment type="pathway">
    <text evidence="6">Phenylpropanoid metabolism; trans-cinnamate biosynthesis; trans-cinnamate from L-phenylalanine: step 1/1.</text>
</comment>
<comment type="subunit">
    <text evidence="2">Homotetramer.</text>
</comment>
<comment type="subcellular location">
    <subcellularLocation>
        <location evidence="6">Cytoplasm</location>
    </subcellularLocation>
</comment>
<comment type="PTM">
    <text evidence="3">Contains an active site 4-methylidene-imidazol-5-one (MIO), which is formed autocatalytically by cyclization and dehydration of residues Ala-Ser-Gly.</text>
</comment>
<comment type="similarity">
    <text evidence="6">Belongs to the PAL/histidase family.</text>
</comment>